<sequence>MSNLKKISDEDRESKFGYVFAVSGPVVTAERMSGSAMYELVRVGYYELVGEIIRLEGDMATIQVYEETSGVTVGDPVLRTGKPLSVELGPGIMGSIFDGIQRPLKDINEMTSSIYIPKGINVPCLSRTQSWSFNPLNVKAGSHITGGDLYGIVHENTLVKHKLMVPPRAKGTVKYIAPSGNYTVDDVILETEFDGEISKFTMLQVWPVRQPRPVTEKLPANHPLLTGQRVLDSLFPCVQGGTTAIPGAFGCGKTVISQSLSKYSNSDVIVYVGCGERGNEMSEVLRDFPELSVEIDGVTESIMKRTALVANTSNMPVAAREASIYTGITLSEYFRDMGYNVSMMADSTSRWAEALREISGRLAEMPADSGYPAYLGARLASFYERAGRVKCLGNPEREGSVSIVGAVSPPGGDFSDPVTSATLGIVQVFWGLDKKLAQRKHFPSINWLISYSKYMRALEDFYDKNFPEFVPMRTKVKEILQEEEDLSEIVQLVGKASLAETDKITLEVAKLLKDDFLQQNSYSAYDRFCPFYKTVGMLKNMIGFYDMARHAVETTAQSENKITWNVIRDSMGQILYQLSSMKFKDPVKDGEPKIKADFDQLYEDMQQAFRNLED</sequence>
<accession>Q5TTG1</accession>
<keyword id="KW-0067">ATP-binding</keyword>
<keyword id="KW-0375">Hydrogen ion transport</keyword>
<keyword id="KW-0406">Ion transport</keyword>
<keyword id="KW-0547">Nucleotide-binding</keyword>
<keyword id="KW-1185">Reference proteome</keyword>
<keyword id="KW-1278">Translocase</keyword>
<keyword id="KW-0813">Transport</keyword>
<organism>
    <name type="scientific">Anopheles gambiae</name>
    <name type="common">African malaria mosquito</name>
    <dbReference type="NCBI Taxonomy" id="7165"/>
    <lineage>
        <taxon>Eukaryota</taxon>
        <taxon>Metazoa</taxon>
        <taxon>Ecdysozoa</taxon>
        <taxon>Arthropoda</taxon>
        <taxon>Hexapoda</taxon>
        <taxon>Insecta</taxon>
        <taxon>Pterygota</taxon>
        <taxon>Neoptera</taxon>
        <taxon>Endopterygota</taxon>
        <taxon>Diptera</taxon>
        <taxon>Nematocera</taxon>
        <taxon>Culicoidea</taxon>
        <taxon>Culicidae</taxon>
        <taxon>Anophelinae</taxon>
        <taxon>Anopheles</taxon>
    </lineage>
</organism>
<feature type="chain" id="PRO_0000232901" description="V-type proton ATPase catalytic subunit A">
    <location>
        <begin position="1"/>
        <end position="614"/>
    </location>
</feature>
<feature type="binding site" evidence="5">
    <location>
        <begin position="247"/>
        <end position="254"/>
    </location>
    <ligand>
        <name>ATP</name>
        <dbReference type="ChEBI" id="CHEBI:30616"/>
    </ligand>
</feature>
<proteinExistence type="inferred from homology"/>
<gene>
    <name evidence="4" type="primary">Vha68-2</name>
    <name type="ORF">AGAP003153</name>
</gene>
<protein>
    <recommendedName>
        <fullName>V-type proton ATPase catalytic subunit A</fullName>
        <shortName>V-ATPase subunit A</shortName>
        <ecNumber evidence="3">7.1.2.2</ecNumber>
    </recommendedName>
    <alternativeName>
        <fullName>V-ATPase 69 kDa subunit</fullName>
    </alternativeName>
    <alternativeName>
        <fullName>Vacuolar proton pump subunit alpha</fullName>
    </alternativeName>
</protein>
<evidence type="ECO:0000250" key="1">
    <source>
        <dbReference type="UniProtKB" id="P31404"/>
    </source>
</evidence>
<evidence type="ECO:0000250" key="2">
    <source>
        <dbReference type="UniProtKB" id="P38606"/>
    </source>
</evidence>
<evidence type="ECO:0000250" key="3">
    <source>
        <dbReference type="UniProtKB" id="P50516"/>
    </source>
</evidence>
<evidence type="ECO:0000250" key="4">
    <source>
        <dbReference type="UniProtKB" id="Q27331"/>
    </source>
</evidence>
<evidence type="ECO:0000255" key="5"/>
<evidence type="ECO:0000305" key="6"/>
<evidence type="ECO:0000312" key="7">
    <source>
        <dbReference type="EMBL" id="EAA44781.1"/>
    </source>
</evidence>
<comment type="function">
    <text evidence="2 3">Catalytic subunit of the V1 complex of vacuolar(H+)-ATPase (V-ATPase), a multisubunit enzyme composed of a peripheral complex (V1) that hydrolyzes ATP and a membrane integral complex (V0) that translocates protons (By similarity). V-ATPase is responsible for acidifying and maintaining the pH of intracellular compartments and in some cell types, is targeted to the plasma membrane, where it is responsible for acidifying the extracellular environment (By similarity).</text>
</comment>
<comment type="catalytic activity">
    <reaction evidence="3">
        <text>ATP + H2O + 4 H(+)(in) = ADP + phosphate + 5 H(+)(out)</text>
        <dbReference type="Rhea" id="RHEA:57720"/>
        <dbReference type="ChEBI" id="CHEBI:15377"/>
        <dbReference type="ChEBI" id="CHEBI:15378"/>
        <dbReference type="ChEBI" id="CHEBI:30616"/>
        <dbReference type="ChEBI" id="CHEBI:43474"/>
        <dbReference type="ChEBI" id="CHEBI:456216"/>
        <dbReference type="EC" id="7.1.2.2"/>
    </reaction>
</comment>
<comment type="activity regulation">
    <text evidence="1">ATP hydrolysis occurs at the interface between the nucleotide-binding domains of subunits A and B (By similarity). ATP hydrolysis triggers a conformational change in the subunits D and F, which induces a shift of subunit d (By similarity). The c-ring is subsequently rotated and results in a continuous proton translocation across the membrane (By similarity).</text>
</comment>
<comment type="subunit">
    <text evidence="2">V-ATPase is a heteromultimeric enzyme made up of two complexes: the ATP-hydrolytic V1 complex and the proton translocation V0 complex (By similarity). The V1 complex consists of three catalytic AB heterodimers that form a heterohexamer, three peripheral stalks each consisting of EG heterodimers, one central rotor including subunits D and F, and the regulatory subunits C and H (By similarity). The proton translocation complex V0 consists of the proton transport subunit a, a ring of proteolipid subunits c9c'', rotary subunit d, subunits e and f, and the accessory subunits VhaAC45 and ATP6AP2 (By similarity).</text>
</comment>
<comment type="similarity">
    <text evidence="5">Belongs to the ATPase alpha/beta chains family.</text>
</comment>
<name>VATA_ANOGA</name>
<reference evidence="6 7" key="1">
    <citation type="journal article" date="2002" name="Science">
        <title>The genome sequence of the malaria mosquito Anopheles gambiae.</title>
        <authorList>
            <person name="Holt R.A."/>
            <person name="Subramanian G.M."/>
            <person name="Halpern A."/>
            <person name="Sutton G.G."/>
            <person name="Charlab R."/>
            <person name="Nusskern D.R."/>
            <person name="Wincker P."/>
            <person name="Clark A.G."/>
            <person name="Ribeiro J.M.C."/>
            <person name="Wides R."/>
            <person name="Salzberg S.L."/>
            <person name="Loftus B.J."/>
            <person name="Yandell M.D."/>
            <person name="Majoros W.H."/>
            <person name="Rusch D.B."/>
            <person name="Lai Z."/>
            <person name="Kraft C.L."/>
            <person name="Abril J.F."/>
            <person name="Anthouard V."/>
            <person name="Arensburger P."/>
            <person name="Atkinson P.W."/>
            <person name="Baden H."/>
            <person name="de Berardinis V."/>
            <person name="Baldwin D."/>
            <person name="Benes V."/>
            <person name="Biedler J."/>
            <person name="Blass C."/>
            <person name="Bolanos R."/>
            <person name="Boscus D."/>
            <person name="Barnstead M."/>
            <person name="Cai S."/>
            <person name="Center A."/>
            <person name="Chaturverdi K."/>
            <person name="Christophides G.K."/>
            <person name="Chrystal M.A.M."/>
            <person name="Clamp M."/>
            <person name="Cravchik A."/>
            <person name="Curwen V."/>
            <person name="Dana A."/>
            <person name="Delcher A."/>
            <person name="Dew I."/>
            <person name="Evans C.A."/>
            <person name="Flanigan M."/>
            <person name="Grundschober-Freimoser A."/>
            <person name="Friedli L."/>
            <person name="Gu Z."/>
            <person name="Guan P."/>
            <person name="Guigo R."/>
            <person name="Hillenmeyer M.E."/>
            <person name="Hladun S.L."/>
            <person name="Hogan J.R."/>
            <person name="Hong Y.S."/>
            <person name="Hoover J."/>
            <person name="Jaillon O."/>
            <person name="Ke Z."/>
            <person name="Kodira C.D."/>
            <person name="Kokoza E."/>
            <person name="Koutsos A."/>
            <person name="Letunic I."/>
            <person name="Levitsky A.A."/>
            <person name="Liang Y."/>
            <person name="Lin J.-J."/>
            <person name="Lobo N.F."/>
            <person name="Lopez J.R."/>
            <person name="Malek J.A."/>
            <person name="McIntosh T.C."/>
            <person name="Meister S."/>
            <person name="Miller J.R."/>
            <person name="Mobarry C."/>
            <person name="Mongin E."/>
            <person name="Murphy S.D."/>
            <person name="O'Brochta D.A."/>
            <person name="Pfannkoch C."/>
            <person name="Qi R."/>
            <person name="Regier M.A."/>
            <person name="Remington K."/>
            <person name="Shao H."/>
            <person name="Sharakhova M.V."/>
            <person name="Sitter C.D."/>
            <person name="Shetty J."/>
            <person name="Smith T.J."/>
            <person name="Strong R."/>
            <person name="Sun J."/>
            <person name="Thomasova D."/>
            <person name="Ton L.Q."/>
            <person name="Topalis P."/>
            <person name="Tu Z.J."/>
            <person name="Unger M.F."/>
            <person name="Walenz B."/>
            <person name="Wang A.H."/>
            <person name="Wang J."/>
            <person name="Wang M."/>
            <person name="Wang X."/>
            <person name="Woodford K.J."/>
            <person name="Wortman J.R."/>
            <person name="Wu M."/>
            <person name="Yao A."/>
            <person name="Zdobnov E.M."/>
            <person name="Zhang H."/>
            <person name="Zhao Q."/>
            <person name="Zhao S."/>
            <person name="Zhu S.C."/>
            <person name="Zhimulev I."/>
            <person name="Coluzzi M."/>
            <person name="della Torre A."/>
            <person name="Roth C.W."/>
            <person name="Louis C."/>
            <person name="Kalush F."/>
            <person name="Mural R.J."/>
            <person name="Myers E.W."/>
            <person name="Adams M.D."/>
            <person name="Smith H.O."/>
            <person name="Broder S."/>
            <person name="Gardner M.J."/>
            <person name="Fraser C.M."/>
            <person name="Birney E."/>
            <person name="Bork P."/>
            <person name="Brey P.T."/>
            <person name="Venter J.C."/>
            <person name="Weissenbach J."/>
            <person name="Kafatos F.C."/>
            <person name="Collins F.H."/>
            <person name="Hoffman S.L."/>
        </authorList>
    </citation>
    <scope>NUCLEOTIDE SEQUENCE [LARGE SCALE GENOMIC DNA]</scope>
    <source>
        <strain evidence="7">PEST</strain>
    </source>
</reference>
<dbReference type="EC" id="7.1.2.2" evidence="3"/>
<dbReference type="EMBL" id="AAAB01008879">
    <property type="protein sequence ID" value="EAA44781.1"/>
    <property type="molecule type" value="Genomic_DNA"/>
</dbReference>
<dbReference type="SMR" id="Q5TTG1"/>
<dbReference type="FunCoup" id="Q5TTG1">
    <property type="interactions" value="1757"/>
</dbReference>
<dbReference type="STRING" id="7165.Q5TTG1"/>
<dbReference type="PaxDb" id="7165-AGAP003153-PB"/>
<dbReference type="EnsemblMetazoa" id="AGAP003153-RA">
    <property type="protein sequence ID" value="AGAP003153-PA"/>
    <property type="gene ID" value="AGAP003153"/>
</dbReference>
<dbReference type="EnsemblMetazoa" id="AGAP003153-RB">
    <property type="protein sequence ID" value="AGAP003153-PB"/>
    <property type="gene ID" value="AGAP003153"/>
</dbReference>
<dbReference type="EnsemblMetazoa" id="AGAP003153-RC">
    <property type="protein sequence ID" value="AGAP003153-PC"/>
    <property type="gene ID" value="AGAP003153"/>
</dbReference>
<dbReference type="EnsemblMetazoa" id="AGAP003153-RD">
    <property type="protein sequence ID" value="AGAP003153-PD"/>
    <property type="gene ID" value="AGAP003153"/>
</dbReference>
<dbReference type="GeneID" id="1273824"/>
<dbReference type="KEGG" id="aga:1273824"/>
<dbReference type="VEuPathDB" id="VectorBase:AGAMI1_012075"/>
<dbReference type="VEuPathDB" id="VectorBase:AGAP003153"/>
<dbReference type="eggNOG" id="KOG1352">
    <property type="taxonomic scope" value="Eukaryota"/>
</dbReference>
<dbReference type="HOGENOM" id="CLU_008162_3_1_1"/>
<dbReference type="InParanoid" id="Q5TTG1"/>
<dbReference type="OMA" id="RIVKTFW"/>
<dbReference type="OrthoDB" id="1676488at2759"/>
<dbReference type="PhylomeDB" id="Q5TTG1"/>
<dbReference type="Proteomes" id="UP000007062">
    <property type="component" value="Chromosome 2R"/>
</dbReference>
<dbReference type="GO" id="GO:0033180">
    <property type="term" value="C:proton-transporting V-type ATPase, V1 domain"/>
    <property type="evidence" value="ECO:0007669"/>
    <property type="project" value="InterPro"/>
</dbReference>
<dbReference type="GO" id="GO:0005524">
    <property type="term" value="F:ATP binding"/>
    <property type="evidence" value="ECO:0007669"/>
    <property type="project" value="UniProtKB-KW"/>
</dbReference>
<dbReference type="GO" id="GO:0016887">
    <property type="term" value="F:ATP hydrolysis activity"/>
    <property type="evidence" value="ECO:0007669"/>
    <property type="project" value="InterPro"/>
</dbReference>
<dbReference type="GO" id="GO:0046961">
    <property type="term" value="F:proton-transporting ATPase activity, rotational mechanism"/>
    <property type="evidence" value="ECO:0000318"/>
    <property type="project" value="GO_Central"/>
</dbReference>
<dbReference type="GO" id="GO:0046034">
    <property type="term" value="P:ATP metabolic process"/>
    <property type="evidence" value="ECO:0007669"/>
    <property type="project" value="InterPro"/>
</dbReference>
<dbReference type="GO" id="GO:1902600">
    <property type="term" value="P:proton transmembrane transport"/>
    <property type="evidence" value="ECO:0000318"/>
    <property type="project" value="GO_Central"/>
</dbReference>
<dbReference type="CDD" id="cd18111">
    <property type="entry name" value="ATP-synt_V_A-type_alpha_C"/>
    <property type="match status" value="1"/>
</dbReference>
<dbReference type="CDD" id="cd18119">
    <property type="entry name" value="ATP-synt_V_A-type_alpha_N"/>
    <property type="match status" value="1"/>
</dbReference>
<dbReference type="CDD" id="cd01134">
    <property type="entry name" value="V_A-ATPase_A"/>
    <property type="match status" value="1"/>
</dbReference>
<dbReference type="FunFam" id="1.10.1140.10:FF:000002">
    <property type="entry name" value="V-type proton ATPase catalytic subunit A"/>
    <property type="match status" value="1"/>
</dbReference>
<dbReference type="FunFam" id="2.40.30.20:FF:000002">
    <property type="entry name" value="V-type proton ATPase catalytic subunit A"/>
    <property type="match status" value="1"/>
</dbReference>
<dbReference type="FunFam" id="2.40.50.100:FF:000008">
    <property type="entry name" value="V-type proton ATPase catalytic subunit A"/>
    <property type="match status" value="1"/>
</dbReference>
<dbReference type="FunFam" id="3.40.50.300:FF:000052">
    <property type="entry name" value="V-type proton ATPase catalytic subunit A"/>
    <property type="match status" value="1"/>
</dbReference>
<dbReference type="Gene3D" id="2.40.30.20">
    <property type="match status" value="1"/>
</dbReference>
<dbReference type="Gene3D" id="2.40.50.100">
    <property type="match status" value="1"/>
</dbReference>
<dbReference type="Gene3D" id="1.10.1140.10">
    <property type="entry name" value="Bovine Mitochondrial F1-atpase, Atp Synthase Beta Chain, Chain D, domain 3"/>
    <property type="match status" value="1"/>
</dbReference>
<dbReference type="Gene3D" id="3.40.50.300">
    <property type="entry name" value="P-loop containing nucleotide triphosphate hydrolases"/>
    <property type="match status" value="1"/>
</dbReference>
<dbReference type="HAMAP" id="MF_00309">
    <property type="entry name" value="ATP_synth_A_arch"/>
    <property type="match status" value="1"/>
</dbReference>
<dbReference type="InterPro" id="IPR055190">
    <property type="entry name" value="ATP-synt_VA_C"/>
</dbReference>
<dbReference type="InterPro" id="IPR031686">
    <property type="entry name" value="ATP-synth_a_Xtn"/>
</dbReference>
<dbReference type="InterPro" id="IPR023366">
    <property type="entry name" value="ATP_synth_asu-like_sf"/>
</dbReference>
<dbReference type="InterPro" id="IPR020003">
    <property type="entry name" value="ATPase_a/bsu_AS"/>
</dbReference>
<dbReference type="InterPro" id="IPR004100">
    <property type="entry name" value="ATPase_F1/V1/A1_a/bsu_N"/>
</dbReference>
<dbReference type="InterPro" id="IPR036121">
    <property type="entry name" value="ATPase_F1/V1/A1_a/bsu_N_sf"/>
</dbReference>
<dbReference type="InterPro" id="IPR000194">
    <property type="entry name" value="ATPase_F1/V1/A1_a/bsu_nucl-bd"/>
</dbReference>
<dbReference type="InterPro" id="IPR024034">
    <property type="entry name" value="ATPase_F1/V1_b/a_C"/>
</dbReference>
<dbReference type="InterPro" id="IPR005725">
    <property type="entry name" value="ATPase_V1-cplx_asu"/>
</dbReference>
<dbReference type="InterPro" id="IPR027417">
    <property type="entry name" value="P-loop_NTPase"/>
</dbReference>
<dbReference type="InterPro" id="IPR022878">
    <property type="entry name" value="V-ATPase_asu"/>
</dbReference>
<dbReference type="NCBIfam" id="NF003220">
    <property type="entry name" value="PRK04192.1"/>
    <property type="match status" value="1"/>
</dbReference>
<dbReference type="NCBIfam" id="TIGR01042">
    <property type="entry name" value="V-ATPase_V1_A"/>
    <property type="match status" value="1"/>
</dbReference>
<dbReference type="PANTHER" id="PTHR43607:SF1">
    <property type="entry name" value="H(+)-TRANSPORTING TWO-SECTOR ATPASE"/>
    <property type="match status" value="1"/>
</dbReference>
<dbReference type="PANTHER" id="PTHR43607">
    <property type="entry name" value="V-TYPE PROTON ATPASE CATALYTIC SUBUNIT A"/>
    <property type="match status" value="1"/>
</dbReference>
<dbReference type="Pfam" id="PF00006">
    <property type="entry name" value="ATP-synt_ab"/>
    <property type="match status" value="1"/>
</dbReference>
<dbReference type="Pfam" id="PF02874">
    <property type="entry name" value="ATP-synt_ab_N"/>
    <property type="match status" value="1"/>
</dbReference>
<dbReference type="Pfam" id="PF16886">
    <property type="entry name" value="ATP-synt_ab_Xtn"/>
    <property type="match status" value="1"/>
</dbReference>
<dbReference type="Pfam" id="PF22919">
    <property type="entry name" value="ATP-synt_VA_C"/>
    <property type="match status" value="1"/>
</dbReference>
<dbReference type="SUPFAM" id="SSF47917">
    <property type="entry name" value="C-terminal domain of alpha and beta subunits of F1 ATP synthase"/>
    <property type="match status" value="1"/>
</dbReference>
<dbReference type="SUPFAM" id="SSF50615">
    <property type="entry name" value="N-terminal domain of alpha and beta subunits of F1 ATP synthase"/>
    <property type="match status" value="1"/>
</dbReference>
<dbReference type="SUPFAM" id="SSF52540">
    <property type="entry name" value="P-loop containing nucleoside triphosphate hydrolases"/>
    <property type="match status" value="1"/>
</dbReference>
<dbReference type="PROSITE" id="PS00152">
    <property type="entry name" value="ATPASE_ALPHA_BETA"/>
    <property type="match status" value="1"/>
</dbReference>